<organism>
    <name type="scientific">Listeria monocytogenes serotype 4b (strain F2365)</name>
    <dbReference type="NCBI Taxonomy" id="265669"/>
    <lineage>
        <taxon>Bacteria</taxon>
        <taxon>Bacillati</taxon>
        <taxon>Bacillota</taxon>
        <taxon>Bacilli</taxon>
        <taxon>Bacillales</taxon>
        <taxon>Listeriaceae</taxon>
        <taxon>Listeria</taxon>
    </lineage>
</organism>
<proteinExistence type="inferred from homology"/>
<gene>
    <name evidence="1" type="primary">rhaD</name>
    <name type="ordered locus">LMOf2365_2837</name>
</gene>
<sequence length="273" mass="30545">MTKDIMDAVFIKEMAKTTSNLYRLGWDERNGGNITYLLDEKEVVEYLDVKQIIRTIPMDFDGKKLAGKYFLVTGSGKYFKNVEEAPAVNLGVIQVSEDGKAVHLLWGYTDSGLPTSELPAHFMSHIARLSVDPENRVVMHCHATHLLAMTFTHELTEREFTRTLWQMCTECLVVFPEGVGIIPWLVPGTNEIGEATSEKMKENRLIVWPHHGIYGAGKSMDETFGLIETAEKAAEVYTIVMSQGGIKQAITDEQLKALGERFGVEAKAGYLIN</sequence>
<comment type="function">
    <text evidence="1">Catalyzes the reversible cleavage of L-rhamnulose-1-phosphate to dihydroxyacetone phosphate (DHAP) and L-lactaldehyde.</text>
</comment>
<comment type="catalytic activity">
    <reaction evidence="1">
        <text>L-rhamnulose 1-phosphate = (S)-lactaldehyde + dihydroxyacetone phosphate</text>
        <dbReference type="Rhea" id="RHEA:19689"/>
        <dbReference type="ChEBI" id="CHEBI:18041"/>
        <dbReference type="ChEBI" id="CHEBI:57642"/>
        <dbReference type="ChEBI" id="CHEBI:58313"/>
        <dbReference type="EC" id="4.1.2.19"/>
    </reaction>
</comment>
<comment type="cofactor">
    <cofactor evidence="1">
        <name>Zn(2+)</name>
        <dbReference type="ChEBI" id="CHEBI:29105"/>
    </cofactor>
    <text evidence="1">Binds 1 zinc ion per subunit.</text>
</comment>
<comment type="pathway">
    <text evidence="1">Carbohydrate degradation; L-rhamnose degradation; glycerone phosphate from L-rhamnose: step 3/3.</text>
</comment>
<comment type="subcellular location">
    <subcellularLocation>
        <location evidence="1">Cytoplasm</location>
    </subcellularLocation>
</comment>
<comment type="similarity">
    <text evidence="1">Belongs to the aldolase class II family. RhaD subfamily.</text>
</comment>
<evidence type="ECO:0000255" key="1">
    <source>
        <dbReference type="HAMAP-Rule" id="MF_00770"/>
    </source>
</evidence>
<feature type="chain" id="PRO_0000209664" description="Rhamnulose-1-phosphate aldolase">
    <location>
        <begin position="1"/>
        <end position="273"/>
    </location>
</feature>
<feature type="active site" evidence="1">
    <location>
        <position position="117"/>
    </location>
</feature>
<feature type="binding site" evidence="1">
    <location>
        <position position="140"/>
    </location>
    <ligand>
        <name>Zn(2+)</name>
        <dbReference type="ChEBI" id="CHEBI:29105"/>
    </ligand>
</feature>
<feature type="binding site" evidence="1">
    <location>
        <position position="142"/>
    </location>
    <ligand>
        <name>Zn(2+)</name>
        <dbReference type="ChEBI" id="CHEBI:29105"/>
    </ligand>
</feature>
<feature type="binding site" evidence="1">
    <location>
        <position position="211"/>
    </location>
    <ligand>
        <name>Zn(2+)</name>
        <dbReference type="ChEBI" id="CHEBI:29105"/>
    </ligand>
</feature>
<accession>Q71VR5</accession>
<reference key="1">
    <citation type="journal article" date="2004" name="Nucleic Acids Res.">
        <title>Whole genome comparisons of serotype 4b and 1/2a strains of the food-borne pathogen Listeria monocytogenes reveal new insights into the core genome components of this species.</title>
        <authorList>
            <person name="Nelson K.E."/>
            <person name="Fouts D.E."/>
            <person name="Mongodin E.F."/>
            <person name="Ravel J."/>
            <person name="DeBoy R.T."/>
            <person name="Kolonay J.F."/>
            <person name="Rasko D.A."/>
            <person name="Angiuoli S.V."/>
            <person name="Gill S.R."/>
            <person name="Paulsen I.T."/>
            <person name="Peterson J.D."/>
            <person name="White O."/>
            <person name="Nelson W.C."/>
            <person name="Nierman W.C."/>
            <person name="Beanan M.J."/>
            <person name="Brinkac L.M."/>
            <person name="Daugherty S.C."/>
            <person name="Dodson R.J."/>
            <person name="Durkin A.S."/>
            <person name="Madupu R."/>
            <person name="Haft D.H."/>
            <person name="Selengut J."/>
            <person name="Van Aken S.E."/>
            <person name="Khouri H.M."/>
            <person name="Fedorova N."/>
            <person name="Forberger H.A."/>
            <person name="Tran B."/>
            <person name="Kathariou S."/>
            <person name="Wonderling L.D."/>
            <person name="Uhlich G.A."/>
            <person name="Bayles D.O."/>
            <person name="Luchansky J.B."/>
            <person name="Fraser C.M."/>
        </authorList>
    </citation>
    <scope>NUCLEOTIDE SEQUENCE [LARGE SCALE GENOMIC DNA]</scope>
    <source>
        <strain>F2365</strain>
    </source>
</reference>
<name>RHAD_LISMF</name>
<dbReference type="EC" id="4.1.2.19" evidence="1"/>
<dbReference type="EMBL" id="AE017262">
    <property type="protein sequence ID" value="AAT05601.1"/>
    <property type="molecule type" value="Genomic_DNA"/>
</dbReference>
<dbReference type="RefSeq" id="WP_010959116.1">
    <property type="nucleotide sequence ID" value="NC_002973.6"/>
</dbReference>
<dbReference type="SMR" id="Q71VR5"/>
<dbReference type="KEGG" id="lmf:LMOf2365_2837"/>
<dbReference type="HOGENOM" id="CLU_076831_0_0_9"/>
<dbReference type="UniPathway" id="UPA00541">
    <property type="reaction ID" value="UER00603"/>
</dbReference>
<dbReference type="GO" id="GO:0005829">
    <property type="term" value="C:cytosol"/>
    <property type="evidence" value="ECO:0007669"/>
    <property type="project" value="TreeGrafter"/>
</dbReference>
<dbReference type="GO" id="GO:0046872">
    <property type="term" value="F:metal ion binding"/>
    <property type="evidence" value="ECO:0007669"/>
    <property type="project" value="UniProtKB-KW"/>
</dbReference>
<dbReference type="GO" id="GO:0008994">
    <property type="term" value="F:rhamnulose-1-phosphate aldolase activity"/>
    <property type="evidence" value="ECO:0007669"/>
    <property type="project" value="UniProtKB-UniRule"/>
</dbReference>
<dbReference type="GO" id="GO:0019323">
    <property type="term" value="P:pentose catabolic process"/>
    <property type="evidence" value="ECO:0007669"/>
    <property type="project" value="TreeGrafter"/>
</dbReference>
<dbReference type="GO" id="GO:0019301">
    <property type="term" value="P:rhamnose catabolic process"/>
    <property type="evidence" value="ECO:0007669"/>
    <property type="project" value="UniProtKB-UniRule"/>
</dbReference>
<dbReference type="Gene3D" id="3.40.225.10">
    <property type="entry name" value="Class II aldolase/adducin N-terminal domain"/>
    <property type="match status" value="1"/>
</dbReference>
<dbReference type="HAMAP" id="MF_00770">
    <property type="entry name" value="RhaD"/>
    <property type="match status" value="1"/>
</dbReference>
<dbReference type="InterPro" id="IPR050197">
    <property type="entry name" value="Aldolase_class_II_sugar_metab"/>
</dbReference>
<dbReference type="InterPro" id="IPR001303">
    <property type="entry name" value="Aldolase_II/adducin_N"/>
</dbReference>
<dbReference type="InterPro" id="IPR036409">
    <property type="entry name" value="Aldolase_II/adducin_N_sf"/>
</dbReference>
<dbReference type="InterPro" id="IPR013447">
    <property type="entry name" value="Rhamnulose-1-P_Aldolase"/>
</dbReference>
<dbReference type="NCBIfam" id="NF002963">
    <property type="entry name" value="PRK03634.1"/>
    <property type="match status" value="1"/>
</dbReference>
<dbReference type="NCBIfam" id="TIGR02624">
    <property type="entry name" value="rhamnu_1P_ald"/>
    <property type="match status" value="1"/>
</dbReference>
<dbReference type="PANTHER" id="PTHR22789:SF0">
    <property type="entry name" value="3-OXO-TETRONATE 4-PHOSPHATE DECARBOXYLASE-RELATED"/>
    <property type="match status" value="1"/>
</dbReference>
<dbReference type="PANTHER" id="PTHR22789">
    <property type="entry name" value="FUCULOSE PHOSPHATE ALDOLASE"/>
    <property type="match status" value="1"/>
</dbReference>
<dbReference type="Pfam" id="PF00596">
    <property type="entry name" value="Aldolase_II"/>
    <property type="match status" value="1"/>
</dbReference>
<dbReference type="SMART" id="SM01007">
    <property type="entry name" value="Aldolase_II"/>
    <property type="match status" value="1"/>
</dbReference>
<dbReference type="SUPFAM" id="SSF53639">
    <property type="entry name" value="AraD/HMP-PK domain-like"/>
    <property type="match status" value="1"/>
</dbReference>
<protein>
    <recommendedName>
        <fullName evidence="1">Rhamnulose-1-phosphate aldolase</fullName>
        <ecNumber evidence="1">4.1.2.19</ecNumber>
    </recommendedName>
</protein>
<keyword id="KW-0963">Cytoplasm</keyword>
<keyword id="KW-0456">Lyase</keyword>
<keyword id="KW-0479">Metal-binding</keyword>
<keyword id="KW-0684">Rhamnose metabolism</keyword>
<keyword id="KW-0862">Zinc</keyword>